<organism>
    <name type="scientific">Pseudomonas fluorescens (strain ATCC BAA-477 / NRRL B-23932 / Pf-5)</name>
    <dbReference type="NCBI Taxonomy" id="220664"/>
    <lineage>
        <taxon>Bacteria</taxon>
        <taxon>Pseudomonadati</taxon>
        <taxon>Pseudomonadota</taxon>
        <taxon>Gammaproteobacteria</taxon>
        <taxon>Pseudomonadales</taxon>
        <taxon>Pseudomonadaceae</taxon>
        <taxon>Pseudomonas</taxon>
    </lineage>
</organism>
<reference key="1">
    <citation type="journal article" date="2005" name="Nat. Biotechnol.">
        <title>Complete genome sequence of the plant commensal Pseudomonas fluorescens Pf-5.</title>
        <authorList>
            <person name="Paulsen I.T."/>
            <person name="Press C.M."/>
            <person name="Ravel J."/>
            <person name="Kobayashi D.Y."/>
            <person name="Myers G.S.A."/>
            <person name="Mavrodi D.V."/>
            <person name="DeBoy R.T."/>
            <person name="Seshadri R."/>
            <person name="Ren Q."/>
            <person name="Madupu R."/>
            <person name="Dodson R.J."/>
            <person name="Durkin A.S."/>
            <person name="Brinkac L.M."/>
            <person name="Daugherty S.C."/>
            <person name="Sullivan S.A."/>
            <person name="Rosovitz M.J."/>
            <person name="Gwinn M.L."/>
            <person name="Zhou L."/>
            <person name="Schneider D.J."/>
            <person name="Cartinhour S.W."/>
            <person name="Nelson W.C."/>
            <person name="Weidman J."/>
            <person name="Watkins K."/>
            <person name="Tran K."/>
            <person name="Khouri H."/>
            <person name="Pierson E.A."/>
            <person name="Pierson L.S. III"/>
            <person name="Thomashow L.S."/>
            <person name="Loper J.E."/>
        </authorList>
    </citation>
    <scope>NUCLEOTIDE SEQUENCE [LARGE SCALE GENOMIC DNA]</scope>
    <source>
        <strain>ATCC BAA-477 / NRRL B-23932 / Pf-5</strain>
    </source>
</reference>
<comment type="function">
    <text evidence="1">An essential GTPase that binds both GDP and GTP, with rapid nucleotide exchange. Plays a role in 16S rRNA processing and 30S ribosomal subunit biogenesis and possibly also in cell cycle regulation and energy metabolism.</text>
</comment>
<comment type="subunit">
    <text evidence="1">Monomer.</text>
</comment>
<comment type="subcellular location">
    <subcellularLocation>
        <location>Cytoplasm</location>
    </subcellularLocation>
    <subcellularLocation>
        <location evidence="1">Cell inner membrane</location>
        <topology evidence="1">Peripheral membrane protein</topology>
    </subcellularLocation>
</comment>
<comment type="similarity">
    <text evidence="1 2">Belongs to the TRAFAC class TrmE-Era-EngA-EngB-Septin-like GTPase superfamily. Era GTPase family.</text>
</comment>
<keyword id="KW-0997">Cell inner membrane</keyword>
<keyword id="KW-1003">Cell membrane</keyword>
<keyword id="KW-0963">Cytoplasm</keyword>
<keyword id="KW-0342">GTP-binding</keyword>
<keyword id="KW-0472">Membrane</keyword>
<keyword id="KW-0547">Nucleotide-binding</keyword>
<keyword id="KW-0690">Ribosome biogenesis</keyword>
<keyword id="KW-0694">RNA-binding</keyword>
<keyword id="KW-0699">rRNA-binding</keyword>
<gene>
    <name evidence="1" type="primary">era</name>
    <name type="ordered locus">PFL_1072</name>
</gene>
<proteinExistence type="inferred from homology"/>
<feature type="chain" id="PRO_1000079721" description="GTPase Era">
    <location>
        <begin position="1"/>
        <end position="300"/>
    </location>
</feature>
<feature type="domain" description="Era-type G" evidence="2">
    <location>
        <begin position="8"/>
        <end position="176"/>
    </location>
</feature>
<feature type="domain" description="KH type-2" evidence="1">
    <location>
        <begin position="199"/>
        <end position="283"/>
    </location>
</feature>
<feature type="region of interest" description="G1" evidence="2">
    <location>
        <begin position="16"/>
        <end position="23"/>
    </location>
</feature>
<feature type="region of interest" description="G2" evidence="2">
    <location>
        <begin position="42"/>
        <end position="46"/>
    </location>
</feature>
<feature type="region of interest" description="G3" evidence="2">
    <location>
        <begin position="63"/>
        <end position="66"/>
    </location>
</feature>
<feature type="region of interest" description="G4" evidence="2">
    <location>
        <begin position="125"/>
        <end position="128"/>
    </location>
</feature>
<feature type="region of interest" description="G5" evidence="2">
    <location>
        <begin position="155"/>
        <end position="157"/>
    </location>
</feature>
<feature type="binding site" evidence="1">
    <location>
        <begin position="16"/>
        <end position="23"/>
    </location>
    <ligand>
        <name>GTP</name>
        <dbReference type="ChEBI" id="CHEBI:37565"/>
    </ligand>
</feature>
<feature type="binding site" evidence="1">
    <location>
        <begin position="63"/>
        <end position="67"/>
    </location>
    <ligand>
        <name>GTP</name>
        <dbReference type="ChEBI" id="CHEBI:37565"/>
    </ligand>
</feature>
<feature type="binding site" evidence="1">
    <location>
        <begin position="125"/>
        <end position="128"/>
    </location>
    <ligand>
        <name>GTP</name>
        <dbReference type="ChEBI" id="CHEBI:37565"/>
    </ligand>
</feature>
<protein>
    <recommendedName>
        <fullName evidence="1">GTPase Era</fullName>
    </recommendedName>
</protein>
<dbReference type="EMBL" id="CP000076">
    <property type="protein sequence ID" value="AAY90359.1"/>
    <property type="molecule type" value="Genomic_DNA"/>
</dbReference>
<dbReference type="RefSeq" id="WP_011059422.1">
    <property type="nucleotide sequence ID" value="NC_004129.6"/>
</dbReference>
<dbReference type="SMR" id="Q4KHT0"/>
<dbReference type="STRING" id="220664.PFL_1072"/>
<dbReference type="KEGG" id="pfl:PFL_1072"/>
<dbReference type="PATRIC" id="fig|220664.5.peg.1100"/>
<dbReference type="eggNOG" id="COG1159">
    <property type="taxonomic scope" value="Bacteria"/>
</dbReference>
<dbReference type="HOGENOM" id="CLU_038009_1_2_6"/>
<dbReference type="Proteomes" id="UP000008540">
    <property type="component" value="Chromosome"/>
</dbReference>
<dbReference type="GO" id="GO:0005829">
    <property type="term" value="C:cytosol"/>
    <property type="evidence" value="ECO:0007669"/>
    <property type="project" value="TreeGrafter"/>
</dbReference>
<dbReference type="GO" id="GO:0005886">
    <property type="term" value="C:plasma membrane"/>
    <property type="evidence" value="ECO:0007669"/>
    <property type="project" value="UniProtKB-SubCell"/>
</dbReference>
<dbReference type="GO" id="GO:0005525">
    <property type="term" value="F:GTP binding"/>
    <property type="evidence" value="ECO:0007669"/>
    <property type="project" value="UniProtKB-UniRule"/>
</dbReference>
<dbReference type="GO" id="GO:0003924">
    <property type="term" value="F:GTPase activity"/>
    <property type="evidence" value="ECO:0007669"/>
    <property type="project" value="UniProtKB-UniRule"/>
</dbReference>
<dbReference type="GO" id="GO:0043024">
    <property type="term" value="F:ribosomal small subunit binding"/>
    <property type="evidence" value="ECO:0007669"/>
    <property type="project" value="TreeGrafter"/>
</dbReference>
<dbReference type="GO" id="GO:0070181">
    <property type="term" value="F:small ribosomal subunit rRNA binding"/>
    <property type="evidence" value="ECO:0007669"/>
    <property type="project" value="UniProtKB-UniRule"/>
</dbReference>
<dbReference type="GO" id="GO:0000028">
    <property type="term" value="P:ribosomal small subunit assembly"/>
    <property type="evidence" value="ECO:0007669"/>
    <property type="project" value="TreeGrafter"/>
</dbReference>
<dbReference type="CDD" id="cd04163">
    <property type="entry name" value="Era"/>
    <property type="match status" value="1"/>
</dbReference>
<dbReference type="CDD" id="cd22534">
    <property type="entry name" value="KH-II_Era"/>
    <property type="match status" value="1"/>
</dbReference>
<dbReference type="FunFam" id="3.30.300.20:FF:000003">
    <property type="entry name" value="GTPase Era"/>
    <property type="match status" value="1"/>
</dbReference>
<dbReference type="FunFam" id="3.40.50.300:FF:000094">
    <property type="entry name" value="GTPase Era"/>
    <property type="match status" value="1"/>
</dbReference>
<dbReference type="Gene3D" id="3.30.300.20">
    <property type="match status" value="1"/>
</dbReference>
<dbReference type="Gene3D" id="3.40.50.300">
    <property type="entry name" value="P-loop containing nucleotide triphosphate hydrolases"/>
    <property type="match status" value="1"/>
</dbReference>
<dbReference type="HAMAP" id="MF_00367">
    <property type="entry name" value="GTPase_Era"/>
    <property type="match status" value="1"/>
</dbReference>
<dbReference type="InterPro" id="IPR030388">
    <property type="entry name" value="G_ERA_dom"/>
</dbReference>
<dbReference type="InterPro" id="IPR006073">
    <property type="entry name" value="GTP-bd"/>
</dbReference>
<dbReference type="InterPro" id="IPR005662">
    <property type="entry name" value="GTPase_Era-like"/>
</dbReference>
<dbReference type="InterPro" id="IPR015946">
    <property type="entry name" value="KH_dom-like_a/b"/>
</dbReference>
<dbReference type="InterPro" id="IPR004044">
    <property type="entry name" value="KH_dom_type_2"/>
</dbReference>
<dbReference type="InterPro" id="IPR009019">
    <property type="entry name" value="KH_sf_prok-type"/>
</dbReference>
<dbReference type="InterPro" id="IPR027417">
    <property type="entry name" value="P-loop_NTPase"/>
</dbReference>
<dbReference type="InterPro" id="IPR005225">
    <property type="entry name" value="Small_GTP-bd"/>
</dbReference>
<dbReference type="NCBIfam" id="TIGR00436">
    <property type="entry name" value="era"/>
    <property type="match status" value="1"/>
</dbReference>
<dbReference type="NCBIfam" id="NF000908">
    <property type="entry name" value="PRK00089.1"/>
    <property type="match status" value="1"/>
</dbReference>
<dbReference type="NCBIfam" id="TIGR00231">
    <property type="entry name" value="small_GTP"/>
    <property type="match status" value="1"/>
</dbReference>
<dbReference type="PANTHER" id="PTHR42698">
    <property type="entry name" value="GTPASE ERA"/>
    <property type="match status" value="1"/>
</dbReference>
<dbReference type="PANTHER" id="PTHR42698:SF1">
    <property type="entry name" value="GTPASE ERA, MITOCHONDRIAL"/>
    <property type="match status" value="1"/>
</dbReference>
<dbReference type="Pfam" id="PF07650">
    <property type="entry name" value="KH_2"/>
    <property type="match status" value="1"/>
</dbReference>
<dbReference type="Pfam" id="PF01926">
    <property type="entry name" value="MMR_HSR1"/>
    <property type="match status" value="1"/>
</dbReference>
<dbReference type="PRINTS" id="PR00326">
    <property type="entry name" value="GTP1OBG"/>
</dbReference>
<dbReference type="SUPFAM" id="SSF52540">
    <property type="entry name" value="P-loop containing nucleoside triphosphate hydrolases"/>
    <property type="match status" value="1"/>
</dbReference>
<dbReference type="SUPFAM" id="SSF54814">
    <property type="entry name" value="Prokaryotic type KH domain (KH-domain type II)"/>
    <property type="match status" value="1"/>
</dbReference>
<dbReference type="PROSITE" id="PS51713">
    <property type="entry name" value="G_ERA"/>
    <property type="match status" value="1"/>
</dbReference>
<dbReference type="PROSITE" id="PS50823">
    <property type="entry name" value="KH_TYPE_2"/>
    <property type="match status" value="1"/>
</dbReference>
<accession>Q4KHT0</accession>
<name>ERA_PSEF5</name>
<evidence type="ECO:0000255" key="1">
    <source>
        <dbReference type="HAMAP-Rule" id="MF_00367"/>
    </source>
</evidence>
<evidence type="ECO:0000255" key="2">
    <source>
        <dbReference type="PROSITE-ProRule" id="PRU01050"/>
    </source>
</evidence>
<sequence>MTDSTATRCGYVAIVGRPNVGKSTLLNHILGQKLAITSRKPQTTRHNMLGIKTEGAIQAIYVDTPGMHKSNEKALNRYMNKTASAALKDVDVVIFVVDRTKWTDEDQLVLERVQYVQGPVILAINKTDRIEDKAELMPHLTWLQEQLPNAEIVPVSAQQGHNLEALEGLIAKHLPENDHFFPEDQITDRSSRFLAAELVREKIMRQLGAELPYQITVEIEEFKQQGKTLHIHALIIVERDGQKKIIIGDKGERIKRIGMEARKDMELLFDSKVMLNLWVKVKGGWSDDERALRSLGYGDL</sequence>